<keyword id="KW-0489">Methyltransferase</keyword>
<keyword id="KW-1185">Reference proteome</keyword>
<keyword id="KW-0808">Transferase</keyword>
<reference key="1">
    <citation type="journal article" date="2002" name="Genome Res.">
        <title>The genome of Methanosarcina acetivorans reveals extensive metabolic and physiological diversity.</title>
        <authorList>
            <person name="Galagan J.E."/>
            <person name="Nusbaum C."/>
            <person name="Roy A."/>
            <person name="Endrizzi M.G."/>
            <person name="Macdonald P."/>
            <person name="FitzHugh W."/>
            <person name="Calvo S."/>
            <person name="Engels R."/>
            <person name="Smirnov S."/>
            <person name="Atnoor D."/>
            <person name="Brown A."/>
            <person name="Allen N."/>
            <person name="Naylor J."/>
            <person name="Stange-Thomann N."/>
            <person name="DeArellano K."/>
            <person name="Johnson R."/>
            <person name="Linton L."/>
            <person name="McEwan P."/>
            <person name="McKernan K."/>
            <person name="Talamas J."/>
            <person name="Tirrell A."/>
            <person name="Ye W."/>
            <person name="Zimmer A."/>
            <person name="Barber R.D."/>
            <person name="Cann I."/>
            <person name="Graham D.E."/>
            <person name="Grahame D.A."/>
            <person name="Guss A.M."/>
            <person name="Hedderich R."/>
            <person name="Ingram-Smith C."/>
            <person name="Kuettner H.C."/>
            <person name="Krzycki J.A."/>
            <person name="Leigh J.A."/>
            <person name="Li W."/>
            <person name="Liu J."/>
            <person name="Mukhopadhyay B."/>
            <person name="Reeve J.N."/>
            <person name="Smith K."/>
            <person name="Springer T.A."/>
            <person name="Umayam L.A."/>
            <person name="White O."/>
            <person name="White R.H."/>
            <person name="de Macario E.C."/>
            <person name="Ferry J.G."/>
            <person name="Jarrell K.F."/>
            <person name="Jing H."/>
            <person name="Macario A.J.L."/>
            <person name="Paulsen I.T."/>
            <person name="Pritchett M."/>
            <person name="Sowers K.R."/>
            <person name="Swanson R.V."/>
            <person name="Zinder S.H."/>
            <person name="Lander E."/>
            <person name="Metcalf W.W."/>
            <person name="Birren B."/>
        </authorList>
    </citation>
    <scope>NUCLEOTIDE SEQUENCE [LARGE SCALE GENOMIC DNA]</scope>
    <source>
        <strain>ATCC 35395 / DSM 2834 / JCM 12185 / C2A</strain>
    </source>
</reference>
<organism>
    <name type="scientific">Methanosarcina acetivorans (strain ATCC 35395 / DSM 2834 / JCM 12185 / C2A)</name>
    <dbReference type="NCBI Taxonomy" id="188937"/>
    <lineage>
        <taxon>Archaea</taxon>
        <taxon>Methanobacteriati</taxon>
        <taxon>Methanobacteriota</taxon>
        <taxon>Stenosarchaea group</taxon>
        <taxon>Methanomicrobia</taxon>
        <taxon>Methanosarcinales</taxon>
        <taxon>Methanosarcinaceae</taxon>
        <taxon>Methanosarcina</taxon>
    </lineage>
</organism>
<dbReference type="EC" id="2.1.1.-"/>
<dbReference type="EMBL" id="AE010299">
    <property type="protein sequence ID" value="AAM05211.1"/>
    <property type="molecule type" value="Genomic_DNA"/>
</dbReference>
<dbReference type="RefSeq" id="WP_011021808.1">
    <property type="nucleotide sequence ID" value="NC_003552.1"/>
</dbReference>
<dbReference type="SMR" id="Q8TPU9"/>
<dbReference type="STRING" id="188937.MA_1805"/>
<dbReference type="EnsemblBacteria" id="AAM05211">
    <property type="protein sequence ID" value="AAM05211"/>
    <property type="gene ID" value="MA_1805"/>
</dbReference>
<dbReference type="GeneID" id="1473694"/>
<dbReference type="KEGG" id="mac:MA_1805"/>
<dbReference type="HOGENOM" id="CLU_100863_0_0_2"/>
<dbReference type="InParanoid" id="Q8TPU9"/>
<dbReference type="OrthoDB" id="130682at2157"/>
<dbReference type="PhylomeDB" id="Q8TPU9"/>
<dbReference type="Proteomes" id="UP000002487">
    <property type="component" value="Chromosome"/>
</dbReference>
<dbReference type="GO" id="GO:0008168">
    <property type="term" value="F:methyltransferase activity"/>
    <property type="evidence" value="ECO:0007669"/>
    <property type="project" value="UniProtKB-KW"/>
</dbReference>
<dbReference type="GO" id="GO:0032259">
    <property type="term" value="P:methylation"/>
    <property type="evidence" value="ECO:0007669"/>
    <property type="project" value="UniProtKB-KW"/>
</dbReference>
<dbReference type="InterPro" id="IPR030688">
    <property type="entry name" value="MeTrfase_MtrA/MtxA"/>
</dbReference>
<dbReference type="NCBIfam" id="NF002126">
    <property type="entry name" value="PRK00964.1-4"/>
    <property type="match status" value="1"/>
</dbReference>
<dbReference type="NCBIfam" id="NF010654">
    <property type="entry name" value="PRK14053.1"/>
    <property type="match status" value="1"/>
</dbReference>
<dbReference type="Pfam" id="PF04208">
    <property type="entry name" value="MtrA"/>
    <property type="match status" value="1"/>
</dbReference>
<dbReference type="PIRSF" id="PIRSF009452">
    <property type="entry name" value="MtrA_MtxA"/>
    <property type="match status" value="1"/>
</dbReference>
<gene>
    <name type="primary">mtxA</name>
    <name type="ordered locus">MA_1805</name>
</gene>
<name>MTXA_METAC</name>
<accession>Q8TPU9</accession>
<feature type="chain" id="PRO_0000147509" description="Putative methyltransferase Mtx subunit A">
    <location>
        <begin position="1"/>
        <end position="197"/>
    </location>
</feature>
<sequence>MKTIAENWPPVRGDYVTGKPDSRIAVVTLASHLEAFPNAAIWGSSKTENLGVEKIIVNVISNSNIRYVLVCGTESRGHLAGHSLLAIHANGIDEKGRIVGSQGAIPFIENISREAVDRFQRQVTLLDRIGLNDPEEIRKIVEDYRDKGEVYPEEPVVVCAPKKRQASFAVPSSGDVIISEELVMDSMAGIICLAESL</sequence>
<protein>
    <recommendedName>
        <fullName>Putative methyltransferase Mtx subunit A</fullName>
        <ecNumber>2.1.1.-</ecNumber>
    </recommendedName>
</protein>
<proteinExistence type="inferred from homology"/>
<comment type="subunit">
    <text evidence="1">May be part of a complex composed of 3 subunits; MtxA, MtxH and MtxX.</text>
</comment>
<comment type="similarity">
    <text evidence="2">Belongs to the MtrA family.</text>
</comment>
<evidence type="ECO:0000250" key="1"/>
<evidence type="ECO:0000305" key="2"/>